<comment type="function">
    <text evidence="3 4 5 6">Transcription factor; part of the gene cluster that mediates the biosynthesis of aflatoxin, a polyketide-derived furanocoumarin which is part of the most toxic and carcinogenic compounds among the known mycotoxins (PubMed:10216264, PubMed:16535712, PubMed:35080432, PubMed:38829003). Binds to at least 17 genes in the aflatoxin biosynthetic cluster, leading to the activation of an enzymatic cascade reaction that results in aflatoxin biosynthesis (PubMed:10216264). Promoter regions of several biosynthesis genes are bound by aflR in a dimeric form with a 5'-TCG(N5)CGA-3' binding motif (PubMed:10216264, PubMed:38829003). AflR also recognizes 5'-TTAGGCCTAA-3' and 5'-TCGCAGCCCGG-3' binding sequences (PubMed:10216264). AflR achieves its binding specificity through a mechanism in which either two copies of aflR or its complex with aflS bind to target sites on DNA in a highly cooperative manner (PubMed:38829003). AflS acts as a modulator of aflR's DNA-binding by decreasing its DNA-binding affinity (PubMed:38829003). In addition to aflatoxin biosynthesis, also plays a positive role in the fungal growth, spore germination, sclerotial development, and carbohydrate metabolism (PubMed:35080432).</text>
</comment>
<comment type="subunit">
    <text evidence="6">Interacts with aflS.</text>
</comment>
<comment type="subcellular location">
    <subcellularLocation>
        <location evidence="6 9">Nucleus</location>
    </subcellularLocation>
</comment>
<comment type="disruption phenotype">
    <text evidence="5">Significantly reduces the expression of clustering genes involved in the biosynthesis of aflatoxin resulting in a subsequent significant decrease in aflatoxin production (PubMed:35080432). Produces relatively sparse conidia and a very small number of sclerotia (PubMed:35080432). Also affects the expression of genes involved in spore germination, sclerotial development, and carbohydrate metabolism (PubMed:35080432). Does not affect the biosynthesis of cyclopiazonic acid (CPA) (PubMed:35080432).</text>
</comment>
<comment type="sequence caution" evidence="8">
    <conflict type="frameshift">
        <sequence resource="EMBL-CDS" id="AAA57137"/>
    </conflict>
</comment>
<comment type="sequence caution" evidence="8">
    <conflict type="frameshift">
        <sequence resource="EMBL-CDS" id="AAA57138"/>
    </conflict>
</comment>
<gene>
    <name evidence="7" type="primary">aflR</name>
    <name type="synonym">afl-2</name>
    <name type="synonym">afl2</name>
    <name type="synonym">apa-2</name>
    <name type="ORF">AFLA_139360</name>
</gene>
<proteinExistence type="evidence at protein level"/>
<reference key="1">
    <citation type="journal article" date="1994" name="Appl. Environ. Microbiol.">
        <title>Molecular characterization of aflR, a regulatory locus for aflatoxin biosynthesis.</title>
        <authorList>
            <person name="Woloshuk C.P."/>
            <person name="Foutz K.R."/>
            <person name="Brewer J.F."/>
            <person name="Bhatnagar D."/>
            <person name="Cleveland T.E."/>
            <person name="Payne G.A."/>
        </authorList>
    </citation>
    <scope>NUCLEOTIDE SEQUENCE [GENOMIC DNA]</scope>
</reference>
<reference key="2">
    <citation type="journal article" date="2015" name="Genome Announc.">
        <title>Genome sequence of Aspergillus flavus NRRL 3357, a strain that causes aflatoxin contamination of food and feed.</title>
        <authorList>
            <person name="Nierman W.C."/>
            <person name="Yu J."/>
            <person name="Fedorova-Abrams N.D."/>
            <person name="Losada L."/>
            <person name="Cleveland T.E."/>
            <person name="Bhatnagar D."/>
            <person name="Bennett J.W."/>
            <person name="Dean R."/>
            <person name="Payne G.A."/>
        </authorList>
    </citation>
    <scope>NUCLEOTIDE SEQUENCE [LARGE SCALE GENOMIC DNA]</scope>
    <source>
        <strain>ATCC 200026 / FGSC A1120 / IAM 13836 / NRRL 3357 / JCM 12722 / SRRC 167</strain>
    </source>
</reference>
<reference key="3">
    <citation type="journal article" date="1997" name="Appl. Environ. Microbiol.">
        <title>Overexpression of aflR Leads to upregulation of pathway gene Transcription and increased aflatoxin production in Aspergillus flavus.</title>
        <authorList>
            <person name="Flaherty J.E."/>
            <person name="Payne G.A."/>
        </authorList>
    </citation>
    <scope>FUNCTION</scope>
</reference>
<reference key="4">
    <citation type="journal article" date="1999" name="Gene">
        <title>Binding of the C6-zinc cluster protein, AFLR, to the promoters of aflatoxin pathway biosynthesis genes in Aspergillus parasiticus.</title>
        <authorList>
            <person name="Ehrlich K.C."/>
            <person name="Montalbano B.G."/>
            <person name="Cary J.W."/>
        </authorList>
    </citation>
    <scope>FUNCTION</scope>
    <scope>PROMOTER-BINDING</scope>
</reference>
<reference key="5">
    <citation type="journal article" date="2022" name="Microbiol. Spectr.">
        <title>New Insights of Transcriptional Regulator AflR in Aspergillus flavus Physiology.</title>
        <authorList>
            <person name="Wang P."/>
            <person name="Xu J."/>
            <person name="Chang P.K."/>
            <person name="Liu Z."/>
            <person name="Kong Q."/>
        </authorList>
    </citation>
    <scope>FUNCTION</scope>
    <scope>DISRUPTION PHENOTYPE</scope>
</reference>
<reference key="6">
    <citation type="journal article" date="2024" name="Biochem. J.">
        <title>Aflatoxin biosynthesis regulators AflR and AflS: DNA binding affinity, stoichiometry, and kinetics.</title>
        <authorList>
            <person name="Abbas A."/>
            <person name="Prajapati R.K."/>
            <person name="Aalto-Setaelae E."/>
            <person name="Baykov A.A."/>
            <person name="Malinen A.M."/>
        </authorList>
    </citation>
    <scope>FUNCTION</scope>
    <scope>INTERACTION WITH AFLS</scope>
    <scope>SUBCELLULAR LOCATION</scope>
    <scope>DNA-BINDING</scope>
</reference>
<feature type="chain" id="PRO_0000114932" description="Aflatoxin biosynthesis regulatory protein">
    <location>
        <begin position="1"/>
        <end position="444"/>
    </location>
</feature>
<feature type="DNA-binding region" description="Zn(2)-C6 fungal-type" evidence="1">
    <location>
        <begin position="29"/>
        <end position="56"/>
    </location>
</feature>
<feature type="region of interest" description="Disordered" evidence="2">
    <location>
        <begin position="1"/>
        <end position="25"/>
    </location>
</feature>
<feature type="region of interest" description="Disordered" evidence="2">
    <location>
        <begin position="64"/>
        <end position="174"/>
    </location>
</feature>
<feature type="compositionally biased region" description="Basic residues" evidence="2">
    <location>
        <begin position="106"/>
        <end position="116"/>
    </location>
</feature>
<feature type="compositionally biased region" description="Low complexity" evidence="2">
    <location>
        <begin position="120"/>
        <end position="130"/>
    </location>
</feature>
<feature type="compositionally biased region" description="Polar residues" evidence="2">
    <location>
        <begin position="136"/>
        <end position="149"/>
    </location>
</feature>
<organism>
    <name type="scientific">Aspergillus flavus (strain ATCC 200026 / FGSC A1120 / IAM 13836 / NRRL 3357 / JCM 12722 / SRRC 167)</name>
    <dbReference type="NCBI Taxonomy" id="332952"/>
    <lineage>
        <taxon>Eukaryota</taxon>
        <taxon>Fungi</taxon>
        <taxon>Dikarya</taxon>
        <taxon>Ascomycota</taxon>
        <taxon>Pezizomycotina</taxon>
        <taxon>Eurotiomycetes</taxon>
        <taxon>Eurotiomycetidae</taxon>
        <taxon>Eurotiales</taxon>
        <taxon>Aspergillaceae</taxon>
        <taxon>Aspergillus</taxon>
        <taxon>Aspergillus subgen. Circumdati</taxon>
    </lineage>
</organism>
<dbReference type="EMBL" id="L32576">
    <property type="protein sequence ID" value="AAA57137.1"/>
    <property type="status" value="ALT_FRAME"/>
    <property type="molecule type" value="Genomic_DNA"/>
</dbReference>
<dbReference type="EMBL" id="L32577">
    <property type="protein sequence ID" value="AAA57138.1"/>
    <property type="status" value="ALT_FRAME"/>
    <property type="molecule type" value="Genomic_DNA"/>
</dbReference>
<dbReference type="EMBL" id="EQ963478">
    <property type="protein sequence ID" value="EED51170.1"/>
    <property type="molecule type" value="Genomic_DNA"/>
</dbReference>
<dbReference type="RefSeq" id="XP_002379946.1">
    <property type="nucleotide sequence ID" value="XM_002379905.1"/>
</dbReference>
<dbReference type="SMR" id="P41765"/>
<dbReference type="STRING" id="332952.P41765"/>
<dbReference type="EnsemblFungi" id="EED51170">
    <property type="protein sequence ID" value="EED51170"/>
    <property type="gene ID" value="AFLA_139360"/>
</dbReference>
<dbReference type="VEuPathDB" id="FungiDB:AFLA_006306"/>
<dbReference type="HOGENOM" id="CLU_031656_1_0_1"/>
<dbReference type="OMA" id="ACARCIE"/>
<dbReference type="GO" id="GO:0005634">
    <property type="term" value="C:nucleus"/>
    <property type="evidence" value="ECO:0007669"/>
    <property type="project" value="UniProtKB-SubCell"/>
</dbReference>
<dbReference type="GO" id="GO:0003677">
    <property type="term" value="F:DNA binding"/>
    <property type="evidence" value="ECO:0007669"/>
    <property type="project" value="UniProtKB-KW"/>
</dbReference>
<dbReference type="GO" id="GO:0000981">
    <property type="term" value="F:DNA-binding transcription factor activity, RNA polymerase II-specific"/>
    <property type="evidence" value="ECO:0007669"/>
    <property type="project" value="InterPro"/>
</dbReference>
<dbReference type="GO" id="GO:0008270">
    <property type="term" value="F:zinc ion binding"/>
    <property type="evidence" value="ECO:0007669"/>
    <property type="project" value="InterPro"/>
</dbReference>
<dbReference type="GO" id="GO:0045122">
    <property type="term" value="P:aflatoxin biosynthetic process"/>
    <property type="evidence" value="ECO:0007669"/>
    <property type="project" value="InterPro"/>
</dbReference>
<dbReference type="GO" id="GO:0009893">
    <property type="term" value="P:positive regulation of metabolic process"/>
    <property type="evidence" value="ECO:0007669"/>
    <property type="project" value="UniProtKB-ARBA"/>
</dbReference>
<dbReference type="CDD" id="cd00067">
    <property type="entry name" value="GAL4"/>
    <property type="match status" value="1"/>
</dbReference>
<dbReference type="Gene3D" id="4.10.240.10">
    <property type="entry name" value="Zn(2)-C6 fungal-type DNA-binding domain"/>
    <property type="match status" value="1"/>
</dbReference>
<dbReference type="InterPro" id="IPR013700">
    <property type="entry name" value="AflR"/>
</dbReference>
<dbReference type="InterPro" id="IPR050675">
    <property type="entry name" value="OAF3"/>
</dbReference>
<dbReference type="InterPro" id="IPR036864">
    <property type="entry name" value="Zn2-C6_fun-type_DNA-bd_sf"/>
</dbReference>
<dbReference type="InterPro" id="IPR001138">
    <property type="entry name" value="Zn2Cys6_DnaBD"/>
</dbReference>
<dbReference type="PANTHER" id="PTHR31069:SF31">
    <property type="entry name" value="MONODICTYPHENONE CLUSTER TRANSCRIPTION FACTOR-RELATED"/>
    <property type="match status" value="1"/>
</dbReference>
<dbReference type="PANTHER" id="PTHR31069">
    <property type="entry name" value="OLEATE-ACTIVATED TRANSCRIPTION FACTOR 1-RELATED"/>
    <property type="match status" value="1"/>
</dbReference>
<dbReference type="Pfam" id="PF08493">
    <property type="entry name" value="AflR"/>
    <property type="match status" value="1"/>
</dbReference>
<dbReference type="Pfam" id="PF00172">
    <property type="entry name" value="Zn_clus"/>
    <property type="match status" value="1"/>
</dbReference>
<dbReference type="PRINTS" id="PR00755">
    <property type="entry name" value="AFLATOXINBRP"/>
</dbReference>
<dbReference type="SMART" id="SM00066">
    <property type="entry name" value="GAL4"/>
    <property type="match status" value="1"/>
</dbReference>
<dbReference type="SUPFAM" id="SSF57701">
    <property type="entry name" value="Zn2/Cys6 DNA-binding domain"/>
    <property type="match status" value="1"/>
</dbReference>
<dbReference type="PROSITE" id="PS00463">
    <property type="entry name" value="ZN2_CY6_FUNGAL_1"/>
    <property type="match status" value="1"/>
</dbReference>
<dbReference type="PROSITE" id="PS50048">
    <property type="entry name" value="ZN2_CY6_FUNGAL_2"/>
    <property type="match status" value="1"/>
</dbReference>
<protein>
    <recommendedName>
        <fullName evidence="7">Aflatoxin biosynthesis regulatory protein</fullName>
    </recommendedName>
</protein>
<accession>P41765</accession>
<accession>B8NHZ9</accession>
<sequence>MVDHISPRASPGPIRSSQTRRARKLRDSCTSCASSKVRCTKEKPACARCIERGLACQYMVSKRMGRNPRAPSPLDSTRRPSESLPSARSEQGLPAHNTYSTPHAHTQAHTHAHSHPQPHPQSHPQSNQPPHALPTPNGSSSVSAIFSHQSPPPPVETQGLGGDLAGQEQSTLSSLTVDSEFGGSLQSMEHGNHVDFLAESTGSLFDAFLEVGTPMIDPFLESAPLPPFQARYCCFSLALQTLTHLFPHAPLGCQLRLTDGEDSSCNLMTTDMVISGNKRATDAVRKILGCSCAQDGYLLSMVVLIVLKVLAWYAAAAGTQCTSTAAGGETNSGSCSNSPATVSSGCLTEERVLHLPSMMGEDCVDEEDQPRVAAQLVLSELHRVQSLVNLLAKRLQEGGDDAAGIPAHHPASPFSLLGFSGLEANLRHRLRAVSSDIIDYLHRE</sequence>
<keyword id="KW-0238">DNA-binding</keyword>
<keyword id="KW-0479">Metal-binding</keyword>
<keyword id="KW-0539">Nucleus</keyword>
<keyword id="KW-0804">Transcription</keyword>
<keyword id="KW-0805">Transcription regulation</keyword>
<keyword id="KW-0862">Zinc</keyword>
<evidence type="ECO:0000255" key="1">
    <source>
        <dbReference type="PROSITE-ProRule" id="PRU00227"/>
    </source>
</evidence>
<evidence type="ECO:0000256" key="2">
    <source>
        <dbReference type="SAM" id="MobiDB-lite"/>
    </source>
</evidence>
<evidence type="ECO:0000269" key="3">
    <source>
    </source>
</evidence>
<evidence type="ECO:0000269" key="4">
    <source>
    </source>
</evidence>
<evidence type="ECO:0000269" key="5">
    <source>
    </source>
</evidence>
<evidence type="ECO:0000269" key="6">
    <source>
    </source>
</evidence>
<evidence type="ECO:0000303" key="7">
    <source>
    </source>
</evidence>
<evidence type="ECO:0000305" key="8"/>
<evidence type="ECO:0000305" key="9">
    <source>
    </source>
</evidence>
<name>AFLR_ASPFN</name>